<name>HEM1_YERP3</name>
<dbReference type="EC" id="1.2.1.70" evidence="1"/>
<dbReference type="EMBL" id="CP000720">
    <property type="protein sequence ID" value="ABS49836.1"/>
    <property type="molecule type" value="Genomic_DNA"/>
</dbReference>
<dbReference type="RefSeq" id="WP_002211237.1">
    <property type="nucleotide sequence ID" value="NC_009708.1"/>
</dbReference>
<dbReference type="SMR" id="A7FIG2"/>
<dbReference type="GeneID" id="57976645"/>
<dbReference type="KEGG" id="ypi:YpsIP31758_2067"/>
<dbReference type="HOGENOM" id="CLU_035113_2_2_6"/>
<dbReference type="UniPathway" id="UPA00251">
    <property type="reaction ID" value="UER00316"/>
</dbReference>
<dbReference type="Proteomes" id="UP000002412">
    <property type="component" value="Chromosome"/>
</dbReference>
<dbReference type="GO" id="GO:0008883">
    <property type="term" value="F:glutamyl-tRNA reductase activity"/>
    <property type="evidence" value="ECO:0007669"/>
    <property type="project" value="UniProtKB-UniRule"/>
</dbReference>
<dbReference type="GO" id="GO:0050661">
    <property type="term" value="F:NADP binding"/>
    <property type="evidence" value="ECO:0007669"/>
    <property type="project" value="InterPro"/>
</dbReference>
<dbReference type="GO" id="GO:0019353">
    <property type="term" value="P:protoporphyrinogen IX biosynthetic process from glutamate"/>
    <property type="evidence" value="ECO:0007669"/>
    <property type="project" value="TreeGrafter"/>
</dbReference>
<dbReference type="CDD" id="cd05213">
    <property type="entry name" value="NAD_bind_Glutamyl_tRNA_reduct"/>
    <property type="match status" value="1"/>
</dbReference>
<dbReference type="FunFam" id="3.30.460.30:FF:000001">
    <property type="entry name" value="Glutamyl-tRNA reductase"/>
    <property type="match status" value="1"/>
</dbReference>
<dbReference type="FunFam" id="3.40.50.720:FF:000031">
    <property type="entry name" value="Glutamyl-tRNA reductase"/>
    <property type="match status" value="1"/>
</dbReference>
<dbReference type="Gene3D" id="3.30.460.30">
    <property type="entry name" value="Glutamyl-tRNA reductase, N-terminal domain"/>
    <property type="match status" value="1"/>
</dbReference>
<dbReference type="Gene3D" id="3.40.50.720">
    <property type="entry name" value="NAD(P)-binding Rossmann-like Domain"/>
    <property type="match status" value="1"/>
</dbReference>
<dbReference type="HAMAP" id="MF_00087">
    <property type="entry name" value="Glu_tRNA_reductase"/>
    <property type="match status" value="1"/>
</dbReference>
<dbReference type="InterPro" id="IPR000343">
    <property type="entry name" value="4pyrrol_synth_GluRdtase"/>
</dbReference>
<dbReference type="InterPro" id="IPR015896">
    <property type="entry name" value="4pyrrol_synth_GluRdtase_dimer"/>
</dbReference>
<dbReference type="InterPro" id="IPR015895">
    <property type="entry name" value="4pyrrol_synth_GluRdtase_N"/>
</dbReference>
<dbReference type="InterPro" id="IPR018214">
    <property type="entry name" value="GluRdtase_CS"/>
</dbReference>
<dbReference type="InterPro" id="IPR036453">
    <property type="entry name" value="GluRdtase_dimer_dom_sf"/>
</dbReference>
<dbReference type="InterPro" id="IPR036343">
    <property type="entry name" value="GluRdtase_N_sf"/>
</dbReference>
<dbReference type="InterPro" id="IPR036291">
    <property type="entry name" value="NAD(P)-bd_dom_sf"/>
</dbReference>
<dbReference type="InterPro" id="IPR006151">
    <property type="entry name" value="Shikm_DH/Glu-tRNA_Rdtase"/>
</dbReference>
<dbReference type="NCBIfam" id="TIGR01035">
    <property type="entry name" value="hemA"/>
    <property type="match status" value="1"/>
</dbReference>
<dbReference type="PANTHER" id="PTHR43013">
    <property type="entry name" value="GLUTAMYL-TRNA REDUCTASE"/>
    <property type="match status" value="1"/>
</dbReference>
<dbReference type="PANTHER" id="PTHR43013:SF1">
    <property type="entry name" value="GLUTAMYL-TRNA REDUCTASE"/>
    <property type="match status" value="1"/>
</dbReference>
<dbReference type="Pfam" id="PF00745">
    <property type="entry name" value="GlutR_dimer"/>
    <property type="match status" value="1"/>
</dbReference>
<dbReference type="Pfam" id="PF05201">
    <property type="entry name" value="GlutR_N"/>
    <property type="match status" value="1"/>
</dbReference>
<dbReference type="Pfam" id="PF01488">
    <property type="entry name" value="Shikimate_DH"/>
    <property type="match status" value="1"/>
</dbReference>
<dbReference type="PIRSF" id="PIRSF000445">
    <property type="entry name" value="4pyrrol_synth_GluRdtase"/>
    <property type="match status" value="1"/>
</dbReference>
<dbReference type="SUPFAM" id="SSF69742">
    <property type="entry name" value="Glutamyl tRNA-reductase catalytic, N-terminal domain"/>
    <property type="match status" value="1"/>
</dbReference>
<dbReference type="SUPFAM" id="SSF69075">
    <property type="entry name" value="Glutamyl tRNA-reductase dimerization domain"/>
    <property type="match status" value="1"/>
</dbReference>
<dbReference type="SUPFAM" id="SSF51735">
    <property type="entry name" value="NAD(P)-binding Rossmann-fold domains"/>
    <property type="match status" value="1"/>
</dbReference>
<dbReference type="PROSITE" id="PS00747">
    <property type="entry name" value="GLUTR"/>
    <property type="match status" value="1"/>
</dbReference>
<sequence>MTLLALGINHKTAPVSLRERVTFSPESMDQALNSLLQQPLVQGGVVLSTCNRTELYLSVEQQENLHEQLTAWLCNYHKLSPDDVRQSLYWHHGNDAVRHLMRVASGLDSQVLGEPQILGQVKKAFAESQRGQSLSSELERLFQKSFSVAKRVRTETEIGASAVSVAFAACSLARQIFESLSELHVLLVGAGETIELVARHLREHQVKHMIIANRTRERAQSLASEVGAEVITLPEIDARLADADIIISSTASPLPIIGKGMVERALKTRRNQPMLFIDIAVPRDIEPEVGKLSNAYLYSVDDLQAIIQHNMAQRQAAAVQAESIVQQESMNFMTWLRAQGAVETIRDYRSQAEQVRSEMTAKALVAIEQGANVEQVINELAYKLTNRLIHAPTKSLQQAASDGDMERLQLLRDSLGLDQH</sequence>
<reference key="1">
    <citation type="journal article" date="2007" name="PLoS Genet.">
        <title>The complete genome sequence of Yersinia pseudotuberculosis IP31758, the causative agent of Far East scarlet-like fever.</title>
        <authorList>
            <person name="Eppinger M."/>
            <person name="Rosovitz M.J."/>
            <person name="Fricke W.F."/>
            <person name="Rasko D.A."/>
            <person name="Kokorina G."/>
            <person name="Fayolle C."/>
            <person name="Lindler L.E."/>
            <person name="Carniel E."/>
            <person name="Ravel J."/>
        </authorList>
    </citation>
    <scope>NUCLEOTIDE SEQUENCE [LARGE SCALE GENOMIC DNA]</scope>
    <source>
        <strain>IP 31758</strain>
    </source>
</reference>
<keyword id="KW-0521">NADP</keyword>
<keyword id="KW-0560">Oxidoreductase</keyword>
<keyword id="KW-0627">Porphyrin biosynthesis</keyword>
<comment type="function">
    <text evidence="1">Catalyzes the NADPH-dependent reduction of glutamyl-tRNA(Glu) to glutamate 1-semialdehyde (GSA).</text>
</comment>
<comment type="catalytic activity">
    <reaction evidence="1">
        <text>(S)-4-amino-5-oxopentanoate + tRNA(Glu) + NADP(+) = L-glutamyl-tRNA(Glu) + NADPH + H(+)</text>
        <dbReference type="Rhea" id="RHEA:12344"/>
        <dbReference type="Rhea" id="RHEA-COMP:9663"/>
        <dbReference type="Rhea" id="RHEA-COMP:9680"/>
        <dbReference type="ChEBI" id="CHEBI:15378"/>
        <dbReference type="ChEBI" id="CHEBI:57501"/>
        <dbReference type="ChEBI" id="CHEBI:57783"/>
        <dbReference type="ChEBI" id="CHEBI:58349"/>
        <dbReference type="ChEBI" id="CHEBI:78442"/>
        <dbReference type="ChEBI" id="CHEBI:78520"/>
        <dbReference type="EC" id="1.2.1.70"/>
    </reaction>
</comment>
<comment type="pathway">
    <text evidence="1">Porphyrin-containing compound metabolism; protoporphyrin-IX biosynthesis; 5-aminolevulinate from L-glutamyl-tRNA(Glu): step 1/2.</text>
</comment>
<comment type="subunit">
    <text evidence="1">Homodimer.</text>
</comment>
<comment type="domain">
    <text evidence="1">Possesses an unusual extended V-shaped dimeric structure with each monomer consisting of three distinct domains arranged along a curved 'spinal' alpha-helix. The N-terminal catalytic domain specifically recognizes the glutamate moiety of the substrate. The second domain is the NADPH-binding domain, and the third C-terminal domain is responsible for dimerization.</text>
</comment>
<comment type="miscellaneous">
    <text evidence="1">During catalysis, the active site Cys acts as a nucleophile attacking the alpha-carbonyl group of tRNA-bound glutamate with the formation of a thioester intermediate between enzyme and glutamate, and the concomitant release of tRNA(Glu). The thioester intermediate is finally reduced by direct hydride transfer from NADPH, to form the product GSA.</text>
</comment>
<comment type="similarity">
    <text evidence="1">Belongs to the glutamyl-tRNA reductase family.</text>
</comment>
<organism>
    <name type="scientific">Yersinia pseudotuberculosis serotype O:1b (strain IP 31758)</name>
    <dbReference type="NCBI Taxonomy" id="349747"/>
    <lineage>
        <taxon>Bacteria</taxon>
        <taxon>Pseudomonadati</taxon>
        <taxon>Pseudomonadota</taxon>
        <taxon>Gammaproteobacteria</taxon>
        <taxon>Enterobacterales</taxon>
        <taxon>Yersiniaceae</taxon>
        <taxon>Yersinia</taxon>
    </lineage>
</organism>
<accession>A7FIG2</accession>
<feature type="chain" id="PRO_1000057584" description="Glutamyl-tRNA reductase">
    <location>
        <begin position="1"/>
        <end position="420"/>
    </location>
</feature>
<feature type="active site" description="Nucleophile" evidence="1">
    <location>
        <position position="50"/>
    </location>
</feature>
<feature type="binding site" evidence="1">
    <location>
        <begin position="49"/>
        <end position="52"/>
    </location>
    <ligand>
        <name>substrate</name>
    </ligand>
</feature>
<feature type="binding site" evidence="1">
    <location>
        <position position="109"/>
    </location>
    <ligand>
        <name>substrate</name>
    </ligand>
</feature>
<feature type="binding site" evidence="1">
    <location>
        <begin position="114"/>
        <end position="116"/>
    </location>
    <ligand>
        <name>substrate</name>
    </ligand>
</feature>
<feature type="binding site" evidence="1">
    <location>
        <position position="120"/>
    </location>
    <ligand>
        <name>substrate</name>
    </ligand>
</feature>
<feature type="binding site" evidence="1">
    <location>
        <begin position="189"/>
        <end position="194"/>
    </location>
    <ligand>
        <name>NADP(+)</name>
        <dbReference type="ChEBI" id="CHEBI:58349"/>
    </ligand>
</feature>
<feature type="site" description="Important for activity" evidence="1">
    <location>
        <position position="99"/>
    </location>
</feature>
<protein>
    <recommendedName>
        <fullName evidence="1">Glutamyl-tRNA reductase</fullName>
        <shortName evidence="1">GluTR</shortName>
        <ecNumber evidence="1">1.2.1.70</ecNumber>
    </recommendedName>
</protein>
<proteinExistence type="inferred from homology"/>
<evidence type="ECO:0000255" key="1">
    <source>
        <dbReference type="HAMAP-Rule" id="MF_00087"/>
    </source>
</evidence>
<gene>
    <name evidence="1" type="primary">hemA</name>
    <name type="ordered locus">YpsIP31758_2067</name>
</gene>